<dbReference type="EMBL" id="AL445564">
    <property type="protein sequence ID" value="CAC13553.1"/>
    <property type="molecule type" value="Genomic_DNA"/>
</dbReference>
<dbReference type="PIR" id="D90559">
    <property type="entry name" value="D90559"/>
</dbReference>
<dbReference type="RefSeq" id="WP_010925184.1">
    <property type="nucleotide sequence ID" value="NC_002771.1"/>
</dbReference>
<dbReference type="SMR" id="Q98QI1"/>
<dbReference type="STRING" id="272635.gene:17576980"/>
<dbReference type="KEGG" id="mpu:MYPU_3800"/>
<dbReference type="eggNOG" id="COG1159">
    <property type="taxonomic scope" value="Bacteria"/>
</dbReference>
<dbReference type="HOGENOM" id="CLU_038009_1_0_14"/>
<dbReference type="BioCyc" id="MPUL272635:G1GT6-387-MONOMER"/>
<dbReference type="Proteomes" id="UP000000528">
    <property type="component" value="Chromosome"/>
</dbReference>
<dbReference type="GO" id="GO:0005829">
    <property type="term" value="C:cytosol"/>
    <property type="evidence" value="ECO:0007669"/>
    <property type="project" value="TreeGrafter"/>
</dbReference>
<dbReference type="GO" id="GO:0005886">
    <property type="term" value="C:plasma membrane"/>
    <property type="evidence" value="ECO:0007669"/>
    <property type="project" value="UniProtKB-SubCell"/>
</dbReference>
<dbReference type="GO" id="GO:0005525">
    <property type="term" value="F:GTP binding"/>
    <property type="evidence" value="ECO:0007669"/>
    <property type="project" value="UniProtKB-UniRule"/>
</dbReference>
<dbReference type="GO" id="GO:0003924">
    <property type="term" value="F:GTPase activity"/>
    <property type="evidence" value="ECO:0007669"/>
    <property type="project" value="UniProtKB-UniRule"/>
</dbReference>
<dbReference type="GO" id="GO:0043024">
    <property type="term" value="F:ribosomal small subunit binding"/>
    <property type="evidence" value="ECO:0007669"/>
    <property type="project" value="TreeGrafter"/>
</dbReference>
<dbReference type="GO" id="GO:0070181">
    <property type="term" value="F:small ribosomal subunit rRNA binding"/>
    <property type="evidence" value="ECO:0007669"/>
    <property type="project" value="UniProtKB-UniRule"/>
</dbReference>
<dbReference type="GO" id="GO:0000028">
    <property type="term" value="P:ribosomal small subunit assembly"/>
    <property type="evidence" value="ECO:0007669"/>
    <property type="project" value="TreeGrafter"/>
</dbReference>
<dbReference type="CDD" id="cd04163">
    <property type="entry name" value="Era"/>
    <property type="match status" value="1"/>
</dbReference>
<dbReference type="CDD" id="cd22534">
    <property type="entry name" value="KH-II_Era"/>
    <property type="match status" value="1"/>
</dbReference>
<dbReference type="Gene3D" id="3.30.300.20">
    <property type="match status" value="1"/>
</dbReference>
<dbReference type="Gene3D" id="3.40.50.300">
    <property type="entry name" value="P-loop containing nucleotide triphosphate hydrolases"/>
    <property type="match status" value="1"/>
</dbReference>
<dbReference type="HAMAP" id="MF_00367">
    <property type="entry name" value="GTPase_Era"/>
    <property type="match status" value="1"/>
</dbReference>
<dbReference type="InterPro" id="IPR030388">
    <property type="entry name" value="G_ERA_dom"/>
</dbReference>
<dbReference type="InterPro" id="IPR006073">
    <property type="entry name" value="GTP-bd"/>
</dbReference>
<dbReference type="InterPro" id="IPR005662">
    <property type="entry name" value="GTPase_Era-like"/>
</dbReference>
<dbReference type="InterPro" id="IPR015946">
    <property type="entry name" value="KH_dom-like_a/b"/>
</dbReference>
<dbReference type="InterPro" id="IPR004044">
    <property type="entry name" value="KH_dom_type_2"/>
</dbReference>
<dbReference type="InterPro" id="IPR009019">
    <property type="entry name" value="KH_sf_prok-type"/>
</dbReference>
<dbReference type="InterPro" id="IPR027417">
    <property type="entry name" value="P-loop_NTPase"/>
</dbReference>
<dbReference type="InterPro" id="IPR005225">
    <property type="entry name" value="Small_GTP-bd"/>
</dbReference>
<dbReference type="NCBIfam" id="TIGR00436">
    <property type="entry name" value="era"/>
    <property type="match status" value="1"/>
</dbReference>
<dbReference type="NCBIfam" id="NF000908">
    <property type="entry name" value="PRK00089.1"/>
    <property type="match status" value="1"/>
</dbReference>
<dbReference type="NCBIfam" id="TIGR00231">
    <property type="entry name" value="small_GTP"/>
    <property type="match status" value="1"/>
</dbReference>
<dbReference type="PANTHER" id="PTHR42698">
    <property type="entry name" value="GTPASE ERA"/>
    <property type="match status" value="1"/>
</dbReference>
<dbReference type="PANTHER" id="PTHR42698:SF1">
    <property type="entry name" value="GTPASE ERA, MITOCHONDRIAL"/>
    <property type="match status" value="1"/>
</dbReference>
<dbReference type="Pfam" id="PF07650">
    <property type="entry name" value="KH_2"/>
    <property type="match status" value="1"/>
</dbReference>
<dbReference type="Pfam" id="PF01926">
    <property type="entry name" value="MMR_HSR1"/>
    <property type="match status" value="1"/>
</dbReference>
<dbReference type="SUPFAM" id="SSF52540">
    <property type="entry name" value="P-loop containing nucleoside triphosphate hydrolases"/>
    <property type="match status" value="1"/>
</dbReference>
<dbReference type="SUPFAM" id="SSF54814">
    <property type="entry name" value="Prokaryotic type KH domain (KH-domain type II)"/>
    <property type="match status" value="1"/>
</dbReference>
<dbReference type="PROSITE" id="PS51713">
    <property type="entry name" value="G_ERA"/>
    <property type="match status" value="1"/>
</dbReference>
<dbReference type="PROSITE" id="PS50823">
    <property type="entry name" value="KH_TYPE_2"/>
    <property type="match status" value="1"/>
</dbReference>
<protein>
    <recommendedName>
        <fullName evidence="1">GTPase Era</fullName>
    </recommendedName>
</protein>
<name>ERA_MYCPU</name>
<sequence>MKILFSTIIGRPNVGKSTLLNNILEYDLAIVSSKPQATRDQIMGIYSDDDYQLIFTDTPGIYKTKTKFGENLNAQSYESLKDIDLVIFLSPANEEIGPGDEFICEKIKNFTNKIALITKIDLENSEEVLKKKAEKLKSLGFKEIFAISSKDHGSIKKLINEIKKYSYEGERQFDEDMITEKSEKFIAKESIREACIDLLEQELPHSILVEIDSFSEEEREEKNLVEIHSTIYVNKESQKGILIGKGGSKIKKIGISARKKIQRKLGVNVKLFLKIKVKKNWVNQEKIFKKFDN</sequence>
<reference key="1">
    <citation type="journal article" date="2001" name="Nucleic Acids Res.">
        <title>The complete genome sequence of the murine respiratory pathogen Mycoplasma pulmonis.</title>
        <authorList>
            <person name="Chambaud I."/>
            <person name="Heilig R."/>
            <person name="Ferris S."/>
            <person name="Barbe V."/>
            <person name="Samson D."/>
            <person name="Galisson F."/>
            <person name="Moszer I."/>
            <person name="Dybvig K."/>
            <person name="Wroblewski H."/>
            <person name="Viari A."/>
            <person name="Rocha E.P.C."/>
            <person name="Blanchard A."/>
        </authorList>
    </citation>
    <scope>NUCLEOTIDE SEQUENCE [LARGE SCALE GENOMIC DNA]</scope>
    <source>
        <strain>UAB CTIP</strain>
    </source>
</reference>
<evidence type="ECO:0000255" key="1">
    <source>
        <dbReference type="HAMAP-Rule" id="MF_00367"/>
    </source>
</evidence>
<evidence type="ECO:0000255" key="2">
    <source>
        <dbReference type="PROSITE-ProRule" id="PRU01050"/>
    </source>
</evidence>
<organism>
    <name type="scientific">Mycoplasmopsis pulmonis (strain UAB CTIP)</name>
    <name type="common">Mycoplasma pulmonis</name>
    <dbReference type="NCBI Taxonomy" id="272635"/>
    <lineage>
        <taxon>Bacteria</taxon>
        <taxon>Bacillati</taxon>
        <taxon>Mycoplasmatota</taxon>
        <taxon>Mycoplasmoidales</taxon>
        <taxon>Metamycoplasmataceae</taxon>
        <taxon>Mycoplasmopsis</taxon>
    </lineage>
</organism>
<feature type="chain" id="PRO_0000180029" description="GTPase Era">
    <location>
        <begin position="1"/>
        <end position="293"/>
    </location>
</feature>
<feature type="domain" description="Era-type G" evidence="2">
    <location>
        <begin position="2"/>
        <end position="168"/>
    </location>
</feature>
<feature type="domain" description="KH type-2" evidence="1">
    <location>
        <begin position="199"/>
        <end position="279"/>
    </location>
</feature>
<feature type="region of interest" description="G1" evidence="2">
    <location>
        <begin position="10"/>
        <end position="17"/>
    </location>
</feature>
<feature type="region of interest" description="G2" evidence="2">
    <location>
        <begin position="36"/>
        <end position="40"/>
    </location>
</feature>
<feature type="region of interest" description="G3" evidence="2">
    <location>
        <begin position="57"/>
        <end position="60"/>
    </location>
</feature>
<feature type="region of interest" description="G4" evidence="2">
    <location>
        <begin position="118"/>
        <end position="121"/>
    </location>
</feature>
<feature type="region of interest" description="G5" evidence="2">
    <location>
        <begin position="147"/>
        <end position="149"/>
    </location>
</feature>
<feature type="binding site" evidence="1">
    <location>
        <begin position="10"/>
        <end position="17"/>
    </location>
    <ligand>
        <name>GTP</name>
        <dbReference type="ChEBI" id="CHEBI:37565"/>
    </ligand>
</feature>
<feature type="binding site" evidence="1">
    <location>
        <begin position="57"/>
        <end position="61"/>
    </location>
    <ligand>
        <name>GTP</name>
        <dbReference type="ChEBI" id="CHEBI:37565"/>
    </ligand>
</feature>
<feature type="binding site" evidence="1">
    <location>
        <begin position="118"/>
        <end position="121"/>
    </location>
    <ligand>
        <name>GTP</name>
        <dbReference type="ChEBI" id="CHEBI:37565"/>
    </ligand>
</feature>
<proteinExistence type="inferred from homology"/>
<comment type="function">
    <text evidence="1">An essential GTPase that binds both GDP and GTP, with rapid nucleotide exchange. Plays a role in 16S rRNA processing and 30S ribosomal subunit biogenesis and possibly also in cell cycle regulation and energy metabolism.</text>
</comment>
<comment type="subunit">
    <text evidence="1">Monomer.</text>
</comment>
<comment type="subcellular location">
    <subcellularLocation>
        <location>Cytoplasm</location>
    </subcellularLocation>
    <subcellularLocation>
        <location evidence="1">Cell membrane</location>
        <topology evidence="1">Peripheral membrane protein</topology>
    </subcellularLocation>
</comment>
<comment type="similarity">
    <text evidence="1 2">Belongs to the TRAFAC class TrmE-Era-EngA-EngB-Septin-like GTPase superfamily. Era GTPase family.</text>
</comment>
<gene>
    <name evidence="1" type="primary">era</name>
    <name type="ordered locus">MYPU_3800</name>
</gene>
<accession>Q98QI1</accession>
<keyword id="KW-1003">Cell membrane</keyword>
<keyword id="KW-0963">Cytoplasm</keyword>
<keyword id="KW-0342">GTP-binding</keyword>
<keyword id="KW-0472">Membrane</keyword>
<keyword id="KW-0547">Nucleotide-binding</keyword>
<keyword id="KW-1185">Reference proteome</keyword>
<keyword id="KW-0690">Ribosome biogenesis</keyword>
<keyword id="KW-0694">RNA-binding</keyword>
<keyword id="KW-0699">rRNA-binding</keyword>